<accession>O95416</accession>
<accession>B2RAC0</accession>
<accession>Q3KPH7</accession>
<comment type="function">
    <text evidence="1">Acts as a negative regulator of transcription.</text>
</comment>
<comment type="interaction">
    <interactant intactId="EBI-9087806">
        <id>O95416</id>
    </interactant>
    <interactant intactId="EBI-13307975">
        <id>O00213-2</id>
        <label>APBB1</label>
    </interactant>
    <organismsDiffer>false</organismsDiffer>
    <experiments>3</experiments>
</comment>
<comment type="interaction">
    <interactant intactId="EBI-9087806">
        <id>O95416</id>
    </interactant>
    <interactant intactId="EBI-930964">
        <id>P54253</id>
        <label>ATXN1</label>
    </interactant>
    <organismsDiffer>false</organismsDiffer>
    <experiments>3</experiments>
</comment>
<comment type="interaction">
    <interactant intactId="EBI-9087806">
        <id>O95416</id>
    </interactant>
    <interactant intactId="EBI-946046">
        <id>P54252</id>
        <label>ATXN3</label>
    </interactant>
    <organismsDiffer>false</organismsDiffer>
    <experiments>3</experiments>
</comment>
<comment type="interaction">
    <interactant intactId="EBI-9087806">
        <id>O95416</id>
    </interactant>
    <interactant intactId="EBI-748171">
        <id>O43186</id>
        <label>CRX</label>
    </interactant>
    <organismsDiffer>false</organismsDiffer>
    <experiments>3</experiments>
</comment>
<comment type="interaction">
    <interactant intactId="EBI-9087806">
        <id>O95416</id>
    </interactant>
    <interactant intactId="EBI-1759806">
        <id>O75593</id>
        <label>FOXH1</label>
    </interactant>
    <organismsDiffer>false</organismsDiffer>
    <experiments>3</experiments>
</comment>
<comment type="interaction">
    <interactant intactId="EBI-9087806">
        <id>O95416</id>
    </interactant>
    <interactant intactId="EBI-25860013">
        <id>P28799-2</id>
        <label>GRN</label>
    </interactant>
    <organismsDiffer>false</organismsDiffer>
    <experiments>3</experiments>
</comment>
<comment type="interaction">
    <interactant intactId="EBI-9087806">
        <id>O95416</id>
    </interactant>
    <interactant intactId="EBI-466029">
        <id>P42858</id>
        <label>HTT</label>
    </interactant>
    <organismsDiffer>false</organismsDiffer>
    <experiments>12</experiments>
</comment>
<comment type="interaction">
    <interactant intactId="EBI-9087806">
        <id>O95416</id>
    </interactant>
    <interactant intactId="EBI-11992140">
        <id>Q3LI76</id>
        <label>KRTAP15-1</label>
    </interactant>
    <organismsDiffer>false</organismsDiffer>
    <experiments>3</experiments>
</comment>
<comment type="interaction">
    <interactant intactId="EBI-9087806">
        <id>O95416</id>
    </interactant>
    <interactant intactId="EBI-10249231">
        <id>Q69YI7</id>
        <label>NAIF1</label>
    </interactant>
    <organismsDiffer>false</organismsDiffer>
    <experiments>4</experiments>
</comment>
<comment type="interaction">
    <interactant intactId="EBI-9087806">
        <id>O95416</id>
    </interactant>
    <interactant intactId="EBI-493507">
        <id>P04150</id>
        <label>NR3C1</label>
    </interactant>
    <organismsDiffer>false</organismsDiffer>
    <experiments>3</experiments>
</comment>
<comment type="interaction">
    <interactant intactId="EBI-9087806">
        <id>O95416</id>
    </interactant>
    <interactant intactId="EBI-2010251">
        <id>P49810</id>
        <label>PSEN2</label>
    </interactant>
    <organismsDiffer>false</organismsDiffer>
    <experiments>3</experiments>
</comment>
<comment type="interaction">
    <interactant intactId="EBI-9087806">
        <id>O95416</id>
    </interactant>
    <interactant intactId="EBI-6422642">
        <id>Q01974</id>
        <label>ROR2</label>
    </interactant>
    <organismsDiffer>false</organismsDiffer>
    <experiments>5</experiments>
</comment>
<comment type="interaction">
    <interactant intactId="EBI-9087806">
        <id>O95416</id>
    </interactant>
    <interactant intactId="EBI-743976">
        <id>Q96LM6</id>
        <label>SPMIP9</label>
    </interactant>
    <organismsDiffer>false</organismsDiffer>
    <experiments>3</experiments>
</comment>
<comment type="interaction">
    <interactant intactId="EBI-9087806">
        <id>O95416</id>
    </interactant>
    <interactant intactId="EBI-25842075">
        <id>P21980-2</id>
        <label>TGM2</label>
    </interactant>
    <organismsDiffer>false</organismsDiffer>
    <experiments>3</experiments>
</comment>
<comment type="interaction">
    <interactant intactId="EBI-9087806">
        <id>O95416</id>
    </interactant>
    <interactant intactId="EBI-1052596">
        <id>P31930</id>
        <label>UQCRC1</label>
    </interactant>
    <organismsDiffer>false</organismsDiffer>
    <experiments>3</experiments>
</comment>
<comment type="interaction">
    <interactant intactId="EBI-9087806">
        <id>O95416</id>
    </interactant>
    <interactant intactId="EBI-10191303">
        <id>O95231</id>
        <label>VENTX</label>
    </interactant>
    <organismsDiffer>false</organismsDiffer>
    <experiments>3</experiments>
</comment>
<comment type="subcellular location">
    <subcellularLocation>
        <location evidence="2">Nucleus</location>
    </subcellularLocation>
</comment>
<feature type="chain" id="PRO_0000048758" description="Transcription factor SOX-14">
    <location>
        <begin position="1"/>
        <end position="240"/>
    </location>
</feature>
<feature type="DNA-binding region" description="HMG box" evidence="2">
    <location>
        <begin position="8"/>
        <end position="76"/>
    </location>
</feature>
<dbReference type="EMBL" id="AF107043">
    <property type="protein sequence ID" value="AAC95380.1"/>
    <property type="molecule type" value="Genomic_DNA"/>
</dbReference>
<dbReference type="EMBL" id="AJ006230">
    <property type="protein sequence ID" value="CAB43111.1"/>
    <property type="molecule type" value="Genomic_DNA"/>
</dbReference>
<dbReference type="EMBL" id="AF193436">
    <property type="protein sequence ID" value="AAF76294.1"/>
    <property type="molecule type" value="Genomic_DNA"/>
</dbReference>
<dbReference type="EMBL" id="AK314127">
    <property type="protein sequence ID" value="BAG36817.1"/>
    <property type="molecule type" value="mRNA"/>
</dbReference>
<dbReference type="EMBL" id="CH471052">
    <property type="protein sequence ID" value="EAW79097.1"/>
    <property type="molecule type" value="Genomic_DNA"/>
</dbReference>
<dbReference type="EMBL" id="BC106729">
    <property type="protein sequence ID" value="AAI06730.1"/>
    <property type="molecule type" value="mRNA"/>
</dbReference>
<dbReference type="EMBL" id="BC106730">
    <property type="protein sequence ID" value="AAI06731.1"/>
    <property type="molecule type" value="mRNA"/>
</dbReference>
<dbReference type="EMBL" id="AF032451">
    <property type="protein sequence ID" value="AAC94971.1"/>
    <property type="molecule type" value="Genomic_DNA"/>
</dbReference>
<dbReference type="CCDS" id="CCDS3094.1"/>
<dbReference type="RefSeq" id="NP_004180.1">
    <property type="nucleotide sequence ID" value="NM_004189.4"/>
</dbReference>
<dbReference type="SMR" id="O95416"/>
<dbReference type="BioGRID" id="113991">
    <property type="interactions" value="10"/>
</dbReference>
<dbReference type="FunCoup" id="O95416">
    <property type="interactions" value="22"/>
</dbReference>
<dbReference type="IntAct" id="O95416">
    <property type="interactions" value="19"/>
</dbReference>
<dbReference type="STRING" id="9606.ENSP00000305343"/>
<dbReference type="iPTMnet" id="O95416"/>
<dbReference type="PhosphoSitePlus" id="O95416"/>
<dbReference type="BioMuta" id="SOX14"/>
<dbReference type="jPOST" id="O95416"/>
<dbReference type="MassIVE" id="O95416"/>
<dbReference type="PaxDb" id="9606-ENSP00000305343"/>
<dbReference type="PeptideAtlas" id="O95416"/>
<dbReference type="Antibodypedia" id="17867">
    <property type="antibodies" value="146 antibodies from 25 providers"/>
</dbReference>
<dbReference type="DNASU" id="8403"/>
<dbReference type="Ensembl" id="ENST00000306087.3">
    <property type="protein sequence ID" value="ENSP00000305343.1"/>
    <property type="gene ID" value="ENSG00000168875.3"/>
</dbReference>
<dbReference type="GeneID" id="8403"/>
<dbReference type="KEGG" id="hsa:8403"/>
<dbReference type="MANE-Select" id="ENST00000306087.3">
    <property type="protein sequence ID" value="ENSP00000305343.1"/>
    <property type="RefSeq nucleotide sequence ID" value="NM_004189.4"/>
    <property type="RefSeq protein sequence ID" value="NP_004180.1"/>
</dbReference>
<dbReference type="UCSC" id="uc003erm.3">
    <property type="organism name" value="human"/>
</dbReference>
<dbReference type="AGR" id="HGNC:11193"/>
<dbReference type="CTD" id="8403"/>
<dbReference type="DisGeNET" id="8403"/>
<dbReference type="GeneCards" id="SOX14"/>
<dbReference type="HGNC" id="HGNC:11193">
    <property type="gene designation" value="SOX14"/>
</dbReference>
<dbReference type="HPA" id="ENSG00000168875">
    <property type="expression patterns" value="Tissue enhanced (brain, placenta)"/>
</dbReference>
<dbReference type="MIM" id="604747">
    <property type="type" value="gene"/>
</dbReference>
<dbReference type="neXtProt" id="NX_O95416"/>
<dbReference type="OpenTargets" id="ENSG00000168875"/>
<dbReference type="PharmGKB" id="PA36030"/>
<dbReference type="VEuPathDB" id="HostDB:ENSG00000168875"/>
<dbReference type="eggNOG" id="KOG0527">
    <property type="taxonomic scope" value="Eukaryota"/>
</dbReference>
<dbReference type="GeneTree" id="ENSGT00940000160749"/>
<dbReference type="HOGENOM" id="CLU_021123_3_1_1"/>
<dbReference type="InParanoid" id="O95416"/>
<dbReference type="OMA" id="KMTQEMP"/>
<dbReference type="OrthoDB" id="6247875at2759"/>
<dbReference type="PAN-GO" id="O95416">
    <property type="GO annotations" value="5 GO annotations based on evolutionary models"/>
</dbReference>
<dbReference type="PhylomeDB" id="O95416"/>
<dbReference type="TreeFam" id="TF351735"/>
<dbReference type="PathwayCommons" id="O95416"/>
<dbReference type="SignaLink" id="O95416"/>
<dbReference type="BioGRID-ORCS" id="8403">
    <property type="hits" value="13 hits in 1160 CRISPR screens"/>
</dbReference>
<dbReference type="CD-CODE" id="DEE660B4">
    <property type="entry name" value="Stress granule"/>
</dbReference>
<dbReference type="GeneWiki" id="SOX14"/>
<dbReference type="GenomeRNAi" id="8403"/>
<dbReference type="Pharos" id="O95416">
    <property type="development level" value="Tbio"/>
</dbReference>
<dbReference type="PRO" id="PR:O95416"/>
<dbReference type="Proteomes" id="UP000005640">
    <property type="component" value="Chromosome 3"/>
</dbReference>
<dbReference type="RNAct" id="O95416">
    <property type="molecule type" value="protein"/>
</dbReference>
<dbReference type="Bgee" id="ENSG00000168875">
    <property type="expression patterns" value="Expressed in placenta and 7 other cell types or tissues"/>
</dbReference>
<dbReference type="GO" id="GO:0000785">
    <property type="term" value="C:chromatin"/>
    <property type="evidence" value="ECO:0000247"/>
    <property type="project" value="NTNU_SB"/>
</dbReference>
<dbReference type="GO" id="GO:0005634">
    <property type="term" value="C:nucleus"/>
    <property type="evidence" value="ECO:0000318"/>
    <property type="project" value="GO_Central"/>
</dbReference>
<dbReference type="GO" id="GO:0005667">
    <property type="term" value="C:transcription regulator complex"/>
    <property type="evidence" value="ECO:0007669"/>
    <property type="project" value="Ensembl"/>
</dbReference>
<dbReference type="GO" id="GO:0003682">
    <property type="term" value="F:chromatin binding"/>
    <property type="evidence" value="ECO:0007669"/>
    <property type="project" value="Ensembl"/>
</dbReference>
<dbReference type="GO" id="GO:0001228">
    <property type="term" value="F:DNA-binding transcription activator activity, RNA polymerase II-specific"/>
    <property type="evidence" value="ECO:0000318"/>
    <property type="project" value="GO_Central"/>
</dbReference>
<dbReference type="GO" id="GO:0000981">
    <property type="term" value="F:DNA-binding transcription factor activity, RNA polymerase II-specific"/>
    <property type="evidence" value="ECO:0000247"/>
    <property type="project" value="NTNU_SB"/>
</dbReference>
<dbReference type="GO" id="GO:0000978">
    <property type="term" value="F:RNA polymerase II cis-regulatory region sequence-specific DNA binding"/>
    <property type="evidence" value="ECO:0000318"/>
    <property type="project" value="GO_Central"/>
</dbReference>
<dbReference type="GO" id="GO:0043565">
    <property type="term" value="F:sequence-specific DNA binding"/>
    <property type="evidence" value="ECO:0000250"/>
    <property type="project" value="UniProtKB"/>
</dbReference>
<dbReference type="GO" id="GO:1990837">
    <property type="term" value="F:sequence-specific double-stranded DNA binding"/>
    <property type="evidence" value="ECO:0000314"/>
    <property type="project" value="ARUK-UCL"/>
</dbReference>
<dbReference type="GO" id="GO:0007420">
    <property type="term" value="P:brain development"/>
    <property type="evidence" value="ECO:0000318"/>
    <property type="project" value="GO_Central"/>
</dbReference>
<dbReference type="GO" id="GO:0009649">
    <property type="term" value="P:entrainment of circadian clock"/>
    <property type="evidence" value="ECO:0007669"/>
    <property type="project" value="Ensembl"/>
</dbReference>
<dbReference type="GO" id="GO:0045892">
    <property type="term" value="P:negative regulation of DNA-templated transcription"/>
    <property type="evidence" value="ECO:0000250"/>
    <property type="project" value="UniProtKB"/>
</dbReference>
<dbReference type="GO" id="GO:0000122">
    <property type="term" value="P:negative regulation of transcription by RNA polymerase II"/>
    <property type="evidence" value="ECO:0000250"/>
    <property type="project" value="UniProtKB"/>
</dbReference>
<dbReference type="GO" id="GO:0007399">
    <property type="term" value="P:nervous system development"/>
    <property type="evidence" value="ECO:0000304"/>
    <property type="project" value="UniProtKB"/>
</dbReference>
<dbReference type="GO" id="GO:0030182">
    <property type="term" value="P:neuron differentiation"/>
    <property type="evidence" value="ECO:0000318"/>
    <property type="project" value="GO_Central"/>
</dbReference>
<dbReference type="GO" id="GO:0045944">
    <property type="term" value="P:positive regulation of transcription by RNA polymerase II"/>
    <property type="evidence" value="ECO:0000318"/>
    <property type="project" value="GO_Central"/>
</dbReference>
<dbReference type="GO" id="GO:2001222">
    <property type="term" value="P:regulation of neuron migration"/>
    <property type="evidence" value="ECO:0007669"/>
    <property type="project" value="Ensembl"/>
</dbReference>
<dbReference type="GO" id="GO:0007601">
    <property type="term" value="P:visual perception"/>
    <property type="evidence" value="ECO:0007669"/>
    <property type="project" value="Ensembl"/>
</dbReference>
<dbReference type="CDD" id="cd01388">
    <property type="entry name" value="HMG-box_SoxB"/>
    <property type="match status" value="1"/>
</dbReference>
<dbReference type="FunFam" id="1.10.30.10:FF:000002">
    <property type="entry name" value="transcription factor Sox-2"/>
    <property type="match status" value="1"/>
</dbReference>
<dbReference type="Gene3D" id="1.10.30.10">
    <property type="entry name" value="High mobility group box domain"/>
    <property type="match status" value="1"/>
</dbReference>
<dbReference type="InterPro" id="IPR009071">
    <property type="entry name" value="HMG_box_dom"/>
</dbReference>
<dbReference type="InterPro" id="IPR036910">
    <property type="entry name" value="HMG_box_dom_sf"/>
</dbReference>
<dbReference type="InterPro" id="IPR022097">
    <property type="entry name" value="SOX_fam"/>
</dbReference>
<dbReference type="InterPro" id="IPR050140">
    <property type="entry name" value="SRY-related_HMG-box_TF-like"/>
</dbReference>
<dbReference type="PANTHER" id="PTHR10270">
    <property type="entry name" value="SOX TRANSCRIPTION FACTOR"/>
    <property type="match status" value="1"/>
</dbReference>
<dbReference type="PANTHER" id="PTHR10270:SF107">
    <property type="entry name" value="TRANSCRIPTION FACTOR SOX-14"/>
    <property type="match status" value="1"/>
</dbReference>
<dbReference type="Pfam" id="PF00505">
    <property type="entry name" value="HMG_box"/>
    <property type="match status" value="1"/>
</dbReference>
<dbReference type="Pfam" id="PF12336">
    <property type="entry name" value="SOXp"/>
    <property type="match status" value="1"/>
</dbReference>
<dbReference type="SMART" id="SM00398">
    <property type="entry name" value="HMG"/>
    <property type="match status" value="1"/>
</dbReference>
<dbReference type="SUPFAM" id="SSF47095">
    <property type="entry name" value="HMG-box"/>
    <property type="match status" value="1"/>
</dbReference>
<dbReference type="PROSITE" id="PS50118">
    <property type="entry name" value="HMG_BOX_2"/>
    <property type="match status" value="1"/>
</dbReference>
<keyword id="KW-0238">DNA-binding</keyword>
<keyword id="KW-0539">Nucleus</keyword>
<keyword id="KW-1267">Proteomics identification</keyword>
<keyword id="KW-1185">Reference proteome</keyword>
<keyword id="KW-0678">Repressor</keyword>
<keyword id="KW-0804">Transcription</keyword>
<keyword id="KW-0805">Transcription regulation</keyword>
<gene>
    <name type="primary">SOX14</name>
    <name type="synonym">SOX28</name>
</gene>
<evidence type="ECO:0000250" key="1"/>
<evidence type="ECO:0000255" key="2">
    <source>
        <dbReference type="PROSITE-ProRule" id="PRU00267"/>
    </source>
</evidence>
<sequence length="240" mass="26485">MSKPSDHIKRPMNAFMVWSRGQRRKMAQENPKMHNSEISKRLGAEWKLLSEAEKRPYIDEAKRLRAQHMKEHPDYKYRPRRKPKNLLKKDRYVFPLPYLGDTDPLKAAGLPVGASDGLLSAPEKARAFLPPASAPYSLLDPAQFSSSAIQKMGEVPHTLATGALPYASTLGYQNGAFGSLSCPSQHTHTHPSPTNPGYVVPCNCTAWSASTLQPPVAYILFPGMTKTGIDPYSSAHATAM</sequence>
<proteinExistence type="evidence at protein level"/>
<reference key="1">
    <citation type="journal article" date="1999" name="Mamm. Genome">
        <title>The isolation and high-resolution chromosomal mapping of human SOX14 and SOX21; two members of the SOX gene family related to SOX1, SOX2, and SOX3.</title>
        <authorList>
            <person name="Malas S."/>
            <person name="Duthie S."/>
            <person name="Deloukas P."/>
            <person name="Episkopou V."/>
        </authorList>
    </citation>
    <scope>NUCLEOTIDE SEQUENCE [GENOMIC DNA]</scope>
</reference>
<reference key="2">
    <citation type="journal article" date="1998" name="Cytogenet. Cell Genet.">
        <title>Characterisation and mapping of the human SOX14 gene.</title>
        <authorList>
            <person name="Arsic N."/>
            <person name="Rajic T."/>
            <person name="Stanojcic S."/>
            <person name="Goodfellow P.N."/>
            <person name="Stevanovic M."/>
        </authorList>
    </citation>
    <scope>NUCLEOTIDE SEQUENCE [GENOMIC DNA]</scope>
</reference>
<reference key="3">
    <citation type="journal article" date="2000" name="Hum. Genet.">
        <title>Fine mapping of the neurally expressed gene SOX14 to human 3q23, relative to three congenital diseases.</title>
        <authorList>
            <person name="Hargrave M."/>
            <person name="James K."/>
            <person name="Nield K."/>
            <person name="Toomes C."/>
            <person name="Georgas K."/>
            <person name="Sullivan T."/>
            <person name="Verzijl H.T."/>
            <person name="Oley C.A."/>
            <person name="Little M."/>
            <person name="De Jonghe P."/>
            <person name="Kwon J.M."/>
            <person name="Kremer H."/>
            <person name="Dixon M.J."/>
            <person name="Timmerman V."/>
            <person name="Yamada T."/>
            <person name="Koopman P."/>
        </authorList>
    </citation>
    <scope>NUCLEOTIDE SEQUENCE [GENOMIC DNA]</scope>
</reference>
<reference key="4">
    <citation type="journal article" date="2004" name="Nat. Genet.">
        <title>Complete sequencing and characterization of 21,243 full-length human cDNAs.</title>
        <authorList>
            <person name="Ota T."/>
            <person name="Suzuki Y."/>
            <person name="Nishikawa T."/>
            <person name="Otsuki T."/>
            <person name="Sugiyama T."/>
            <person name="Irie R."/>
            <person name="Wakamatsu A."/>
            <person name="Hayashi K."/>
            <person name="Sato H."/>
            <person name="Nagai K."/>
            <person name="Kimura K."/>
            <person name="Makita H."/>
            <person name="Sekine M."/>
            <person name="Obayashi M."/>
            <person name="Nishi T."/>
            <person name="Shibahara T."/>
            <person name="Tanaka T."/>
            <person name="Ishii S."/>
            <person name="Yamamoto J."/>
            <person name="Saito K."/>
            <person name="Kawai Y."/>
            <person name="Isono Y."/>
            <person name="Nakamura Y."/>
            <person name="Nagahari K."/>
            <person name="Murakami K."/>
            <person name="Yasuda T."/>
            <person name="Iwayanagi T."/>
            <person name="Wagatsuma M."/>
            <person name="Shiratori A."/>
            <person name="Sudo H."/>
            <person name="Hosoiri T."/>
            <person name="Kaku Y."/>
            <person name="Kodaira H."/>
            <person name="Kondo H."/>
            <person name="Sugawara M."/>
            <person name="Takahashi M."/>
            <person name="Kanda K."/>
            <person name="Yokoi T."/>
            <person name="Furuya T."/>
            <person name="Kikkawa E."/>
            <person name="Omura Y."/>
            <person name="Abe K."/>
            <person name="Kamihara K."/>
            <person name="Katsuta N."/>
            <person name="Sato K."/>
            <person name="Tanikawa M."/>
            <person name="Yamazaki M."/>
            <person name="Ninomiya K."/>
            <person name="Ishibashi T."/>
            <person name="Yamashita H."/>
            <person name="Murakawa K."/>
            <person name="Fujimori K."/>
            <person name="Tanai H."/>
            <person name="Kimata M."/>
            <person name="Watanabe M."/>
            <person name="Hiraoka S."/>
            <person name="Chiba Y."/>
            <person name="Ishida S."/>
            <person name="Ono Y."/>
            <person name="Takiguchi S."/>
            <person name="Watanabe S."/>
            <person name="Yosida M."/>
            <person name="Hotuta T."/>
            <person name="Kusano J."/>
            <person name="Kanehori K."/>
            <person name="Takahashi-Fujii A."/>
            <person name="Hara H."/>
            <person name="Tanase T.-O."/>
            <person name="Nomura Y."/>
            <person name="Togiya S."/>
            <person name="Komai F."/>
            <person name="Hara R."/>
            <person name="Takeuchi K."/>
            <person name="Arita M."/>
            <person name="Imose N."/>
            <person name="Musashino K."/>
            <person name="Yuuki H."/>
            <person name="Oshima A."/>
            <person name="Sasaki N."/>
            <person name="Aotsuka S."/>
            <person name="Yoshikawa Y."/>
            <person name="Matsunawa H."/>
            <person name="Ichihara T."/>
            <person name="Shiohata N."/>
            <person name="Sano S."/>
            <person name="Moriya S."/>
            <person name="Momiyama H."/>
            <person name="Satoh N."/>
            <person name="Takami S."/>
            <person name="Terashima Y."/>
            <person name="Suzuki O."/>
            <person name="Nakagawa S."/>
            <person name="Senoh A."/>
            <person name="Mizoguchi H."/>
            <person name="Goto Y."/>
            <person name="Shimizu F."/>
            <person name="Wakebe H."/>
            <person name="Hishigaki H."/>
            <person name="Watanabe T."/>
            <person name="Sugiyama A."/>
            <person name="Takemoto M."/>
            <person name="Kawakami B."/>
            <person name="Yamazaki M."/>
            <person name="Watanabe K."/>
            <person name="Kumagai A."/>
            <person name="Itakura S."/>
            <person name="Fukuzumi Y."/>
            <person name="Fujimori Y."/>
            <person name="Komiyama M."/>
            <person name="Tashiro H."/>
            <person name="Tanigami A."/>
            <person name="Fujiwara T."/>
            <person name="Ono T."/>
            <person name="Yamada K."/>
            <person name="Fujii Y."/>
            <person name="Ozaki K."/>
            <person name="Hirao M."/>
            <person name="Ohmori Y."/>
            <person name="Kawabata A."/>
            <person name="Hikiji T."/>
            <person name="Kobatake N."/>
            <person name="Inagaki H."/>
            <person name="Ikema Y."/>
            <person name="Okamoto S."/>
            <person name="Okitani R."/>
            <person name="Kawakami T."/>
            <person name="Noguchi S."/>
            <person name="Itoh T."/>
            <person name="Shigeta K."/>
            <person name="Senba T."/>
            <person name="Matsumura K."/>
            <person name="Nakajima Y."/>
            <person name="Mizuno T."/>
            <person name="Morinaga M."/>
            <person name="Sasaki M."/>
            <person name="Togashi T."/>
            <person name="Oyama M."/>
            <person name="Hata H."/>
            <person name="Watanabe M."/>
            <person name="Komatsu T."/>
            <person name="Mizushima-Sugano J."/>
            <person name="Satoh T."/>
            <person name="Shirai Y."/>
            <person name="Takahashi Y."/>
            <person name="Nakagawa K."/>
            <person name="Okumura K."/>
            <person name="Nagase T."/>
            <person name="Nomura N."/>
            <person name="Kikuchi H."/>
            <person name="Masuho Y."/>
            <person name="Yamashita R."/>
            <person name="Nakai K."/>
            <person name="Yada T."/>
            <person name="Nakamura Y."/>
            <person name="Ohara O."/>
            <person name="Isogai T."/>
            <person name="Sugano S."/>
        </authorList>
    </citation>
    <scope>NUCLEOTIDE SEQUENCE [LARGE SCALE MRNA]</scope>
    <source>
        <tissue>Substantia nigra</tissue>
    </source>
</reference>
<reference key="5">
    <citation type="submission" date="2005-09" db="EMBL/GenBank/DDBJ databases">
        <authorList>
            <person name="Mural R.J."/>
            <person name="Istrail S."/>
            <person name="Sutton G.G."/>
            <person name="Florea L."/>
            <person name="Halpern A.L."/>
            <person name="Mobarry C.M."/>
            <person name="Lippert R."/>
            <person name="Walenz B."/>
            <person name="Shatkay H."/>
            <person name="Dew I."/>
            <person name="Miller J.R."/>
            <person name="Flanigan M.J."/>
            <person name="Edwards N.J."/>
            <person name="Bolanos R."/>
            <person name="Fasulo D."/>
            <person name="Halldorsson B.V."/>
            <person name="Hannenhalli S."/>
            <person name="Turner R."/>
            <person name="Yooseph S."/>
            <person name="Lu F."/>
            <person name="Nusskern D.R."/>
            <person name="Shue B.C."/>
            <person name="Zheng X.H."/>
            <person name="Zhong F."/>
            <person name="Delcher A.L."/>
            <person name="Huson D.H."/>
            <person name="Kravitz S.A."/>
            <person name="Mouchard L."/>
            <person name="Reinert K."/>
            <person name="Remington K.A."/>
            <person name="Clark A.G."/>
            <person name="Waterman M.S."/>
            <person name="Eichler E.E."/>
            <person name="Adams M.D."/>
            <person name="Hunkapiller M.W."/>
            <person name="Myers E.W."/>
            <person name="Venter J.C."/>
        </authorList>
    </citation>
    <scope>NUCLEOTIDE SEQUENCE [LARGE SCALE GENOMIC DNA]</scope>
</reference>
<reference key="6">
    <citation type="journal article" date="2004" name="Genome Res.">
        <title>The status, quality, and expansion of the NIH full-length cDNA project: the Mammalian Gene Collection (MGC).</title>
        <authorList>
            <consortium name="The MGC Project Team"/>
        </authorList>
    </citation>
    <scope>NUCLEOTIDE SEQUENCE [LARGE SCALE MRNA]</scope>
</reference>
<reference key="7">
    <citation type="journal article" date="1998" name="FEBS Lett.">
        <title>Further complexity of the human SOX gene family revealed by the combined use of highly degenerate primers and nested PCR.</title>
        <authorList>
            <person name="Cremazy F."/>
            <person name="Soullier S."/>
            <person name="Berta P."/>
            <person name="Jay P."/>
        </authorList>
    </citation>
    <scope>NUCLEOTIDE SEQUENCE [GENOMIC DNA] OF 19-72</scope>
</reference>
<name>SOX14_HUMAN</name>
<organism>
    <name type="scientific">Homo sapiens</name>
    <name type="common">Human</name>
    <dbReference type="NCBI Taxonomy" id="9606"/>
    <lineage>
        <taxon>Eukaryota</taxon>
        <taxon>Metazoa</taxon>
        <taxon>Chordata</taxon>
        <taxon>Craniata</taxon>
        <taxon>Vertebrata</taxon>
        <taxon>Euteleostomi</taxon>
        <taxon>Mammalia</taxon>
        <taxon>Eutheria</taxon>
        <taxon>Euarchontoglires</taxon>
        <taxon>Primates</taxon>
        <taxon>Haplorrhini</taxon>
        <taxon>Catarrhini</taxon>
        <taxon>Hominidae</taxon>
        <taxon>Homo</taxon>
    </lineage>
</organism>
<protein>
    <recommendedName>
        <fullName>Transcription factor SOX-14</fullName>
    </recommendedName>
    <alternativeName>
        <fullName>Protein SOX-28</fullName>
    </alternativeName>
</protein>